<organism>
    <name type="scientific">Chauna chavaria</name>
    <name type="common">Northern screamer</name>
    <dbReference type="NCBI Taxonomy" id="8829"/>
    <lineage>
        <taxon>Eukaryota</taxon>
        <taxon>Metazoa</taxon>
        <taxon>Chordata</taxon>
        <taxon>Craniata</taxon>
        <taxon>Vertebrata</taxon>
        <taxon>Euteleostomi</taxon>
        <taxon>Archelosauria</taxon>
        <taxon>Archosauria</taxon>
        <taxon>Dinosauria</taxon>
        <taxon>Saurischia</taxon>
        <taxon>Theropoda</taxon>
        <taxon>Coelurosauria</taxon>
        <taxon>Aves</taxon>
        <taxon>Neognathae</taxon>
        <taxon>Galloanserae</taxon>
        <taxon>Anseriformes</taxon>
        <taxon>Anhimidae</taxon>
        <taxon>Chauna</taxon>
    </lineage>
</organism>
<sequence>VATVDCSDYPKPACTLEYMPLCGSDNQTYSNKCSFCNAVVDSNGTLTLSHFGKC</sequence>
<proteinExistence type="evidence at protein level"/>
<comment type="subcellular location">
    <subcellularLocation>
        <location>Secreted</location>
    </subcellularLocation>
</comment>
<comment type="domain">
    <text>Avian ovomucoid consists of three homologous, tandem Kazal family inhibitory domains.</text>
</comment>
<evidence type="ECO:0000255" key="1">
    <source>
        <dbReference type="PROSITE-ProRule" id="PRU00798"/>
    </source>
</evidence>
<feature type="chain" id="PRO_0000073080" description="Ovomucoid">
    <location>
        <begin position="1" status="less than"/>
        <end position="54" status="greater than"/>
    </location>
</feature>
<feature type="domain" description="Kazal-like" evidence="1">
    <location>
        <begin position="4"/>
        <end position="54"/>
    </location>
</feature>
<feature type="site" description="Reactive bond 3">
    <location>
        <begin position="16"/>
        <end position="17"/>
    </location>
</feature>
<feature type="glycosylation site" description="N-linked (GlcNAc...) asparagine">
    <location>
        <position position="43"/>
    </location>
</feature>
<feature type="disulfide bond">
    <location>
        <begin position="6"/>
        <end position="36"/>
    </location>
</feature>
<feature type="disulfide bond">
    <location>
        <begin position="14"/>
        <end position="33"/>
    </location>
</feature>
<feature type="disulfide bond">
    <location>
        <begin position="22"/>
        <end position="54"/>
    </location>
</feature>
<feature type="non-terminal residue">
    <location>
        <position position="1"/>
    </location>
</feature>
<feature type="non-terminal residue">
    <location>
        <position position="54"/>
    </location>
</feature>
<protein>
    <recommendedName>
        <fullName>Ovomucoid</fullName>
    </recommendedName>
</protein>
<dbReference type="PIR" id="C61492">
    <property type="entry name" value="C61492"/>
</dbReference>
<dbReference type="SMR" id="P67887"/>
<dbReference type="GO" id="GO:0005576">
    <property type="term" value="C:extracellular region"/>
    <property type="evidence" value="ECO:0007669"/>
    <property type="project" value="UniProtKB-SubCell"/>
</dbReference>
<dbReference type="GO" id="GO:0004867">
    <property type="term" value="F:serine-type endopeptidase inhibitor activity"/>
    <property type="evidence" value="ECO:0007669"/>
    <property type="project" value="UniProtKB-KW"/>
</dbReference>
<dbReference type="CDD" id="cd00104">
    <property type="entry name" value="KAZAL_FS"/>
    <property type="match status" value="1"/>
</dbReference>
<dbReference type="FunFam" id="3.30.60.30:FF:000037">
    <property type="entry name" value="Ovomucoid"/>
    <property type="match status" value="1"/>
</dbReference>
<dbReference type="Gene3D" id="3.30.60.30">
    <property type="match status" value="1"/>
</dbReference>
<dbReference type="InterPro" id="IPR051597">
    <property type="entry name" value="Bifunctional_prot_inhibitor"/>
</dbReference>
<dbReference type="InterPro" id="IPR002350">
    <property type="entry name" value="Kazal_dom"/>
</dbReference>
<dbReference type="InterPro" id="IPR036058">
    <property type="entry name" value="Kazal_dom_sf"/>
</dbReference>
<dbReference type="InterPro" id="IPR001239">
    <property type="entry name" value="Prot_inh_Kazal-m"/>
</dbReference>
<dbReference type="PANTHER" id="PTHR47729:SF1">
    <property type="entry name" value="OVOMUCOID-LIKE-RELATED"/>
    <property type="match status" value="1"/>
</dbReference>
<dbReference type="PANTHER" id="PTHR47729">
    <property type="entry name" value="SERINE PEPTIDASE INHIBITOR, KAZAL TYPE 2, TANDEM DUPLICATE 1-RELATED"/>
    <property type="match status" value="1"/>
</dbReference>
<dbReference type="Pfam" id="PF00050">
    <property type="entry name" value="Kazal_1"/>
    <property type="match status" value="1"/>
</dbReference>
<dbReference type="PRINTS" id="PR00290">
    <property type="entry name" value="KAZALINHBTR"/>
</dbReference>
<dbReference type="SMART" id="SM00280">
    <property type="entry name" value="KAZAL"/>
    <property type="match status" value="1"/>
</dbReference>
<dbReference type="SUPFAM" id="SSF100895">
    <property type="entry name" value="Kazal-type serine protease inhibitors"/>
    <property type="match status" value="1"/>
</dbReference>
<dbReference type="PROSITE" id="PS00282">
    <property type="entry name" value="KAZAL_1"/>
    <property type="match status" value="1"/>
</dbReference>
<dbReference type="PROSITE" id="PS51465">
    <property type="entry name" value="KAZAL_2"/>
    <property type="match status" value="1"/>
</dbReference>
<name>IOVO_CHACH</name>
<reference key="1">
    <citation type="journal article" date="1990" name="J. Protein Chem.">
        <title>Amino acid sequences of ovomucoid third domain from 25 additional species of birds.</title>
        <authorList>
            <person name="Laskowski M. Jr."/>
            <person name="Apostol I."/>
            <person name="Ardelt W."/>
            <person name="Cook J."/>
            <person name="Giletto A."/>
            <person name="Kelly C.A."/>
            <person name="Lu W."/>
            <person name="Park S.J."/>
            <person name="Qasim M.A."/>
            <person name="Whatley H.E."/>
            <person name="Wieczorek A."/>
            <person name="Wynn R."/>
        </authorList>
    </citation>
    <scope>PROTEIN SEQUENCE</scope>
</reference>
<accession>P67887</accession>
<accession>P52240</accession>
<keyword id="KW-0903">Direct protein sequencing</keyword>
<keyword id="KW-1015">Disulfide bond</keyword>
<keyword id="KW-0325">Glycoprotein</keyword>
<keyword id="KW-0646">Protease inhibitor</keyword>
<keyword id="KW-0677">Repeat</keyword>
<keyword id="KW-0964">Secreted</keyword>
<keyword id="KW-0722">Serine protease inhibitor</keyword>